<dbReference type="EMBL" id="U25264">
    <property type="protein sequence ID" value="AAC52255.2"/>
    <property type="molecule type" value="mRNA"/>
</dbReference>
<dbReference type="EMBL" id="BC087625">
    <property type="protein sequence ID" value="AAH87625.1"/>
    <property type="molecule type" value="mRNA"/>
</dbReference>
<dbReference type="RefSeq" id="NP_037159.4">
    <property type="nucleotide sequence ID" value="NM_013027.3"/>
</dbReference>
<dbReference type="BMRB" id="P63301"/>
<dbReference type="SMR" id="P63301"/>
<dbReference type="FunCoup" id="P63301">
    <property type="interactions" value="61"/>
</dbReference>
<dbReference type="STRING" id="10116.ENSRNOP00000018559"/>
<dbReference type="iPTMnet" id="P63301"/>
<dbReference type="PhosphoSitePlus" id="P63301"/>
<dbReference type="PaxDb" id="10116-ENSRNOP00000018559"/>
<dbReference type="GeneID" id="25545"/>
<dbReference type="KEGG" id="rno:25545"/>
<dbReference type="UCSC" id="RGD:3661">
    <property type="organism name" value="rat"/>
</dbReference>
<dbReference type="AGR" id="RGD:3661"/>
<dbReference type="CTD" id="6415"/>
<dbReference type="RGD" id="3661">
    <property type="gene designation" value="Selenow"/>
</dbReference>
<dbReference type="eggNOG" id="ENOG502S9W8">
    <property type="taxonomic scope" value="Eukaryota"/>
</dbReference>
<dbReference type="InParanoid" id="P63301"/>
<dbReference type="OrthoDB" id="4023at9989"/>
<dbReference type="PhylomeDB" id="P63301"/>
<dbReference type="PRO" id="PR:P63301"/>
<dbReference type="Proteomes" id="UP000002494">
    <property type="component" value="Unplaced"/>
</dbReference>
<dbReference type="GO" id="GO:0005829">
    <property type="term" value="C:cytosol"/>
    <property type="evidence" value="ECO:0000318"/>
    <property type="project" value="GO_Central"/>
</dbReference>
<dbReference type="GO" id="GO:0016209">
    <property type="term" value="F:antioxidant activity"/>
    <property type="evidence" value="ECO:0007669"/>
    <property type="project" value="UniProtKB-KW"/>
</dbReference>
<dbReference type="GO" id="GO:0030218">
    <property type="term" value="P:erythrocyte differentiation"/>
    <property type="evidence" value="ECO:0000266"/>
    <property type="project" value="RGD"/>
</dbReference>
<dbReference type="GO" id="GO:0032496">
    <property type="term" value="P:response to lipopolysaccharide"/>
    <property type="evidence" value="ECO:0000266"/>
    <property type="project" value="RGD"/>
</dbReference>
<dbReference type="GO" id="GO:0010269">
    <property type="term" value="P:response to selenium ion"/>
    <property type="evidence" value="ECO:0000270"/>
    <property type="project" value="RGD"/>
</dbReference>
<dbReference type="GO" id="GO:0006950">
    <property type="term" value="P:response to stress"/>
    <property type="evidence" value="ECO:0000266"/>
    <property type="project" value="RGD"/>
</dbReference>
<dbReference type="FunFam" id="3.40.30.10:FF:000158">
    <property type="entry name" value="Selenoprotein W"/>
    <property type="match status" value="1"/>
</dbReference>
<dbReference type="Gene3D" id="3.40.30.10">
    <property type="entry name" value="Glutaredoxin"/>
    <property type="match status" value="1"/>
</dbReference>
<dbReference type="InterPro" id="IPR011893">
    <property type="entry name" value="Selenoprotein_Rdx-typ"/>
</dbReference>
<dbReference type="InterPro" id="IPR051441">
    <property type="entry name" value="SelW_related"/>
</dbReference>
<dbReference type="InterPro" id="IPR036249">
    <property type="entry name" value="Thioredoxin-like_sf"/>
</dbReference>
<dbReference type="NCBIfam" id="TIGR02174">
    <property type="entry name" value="CXXU_selWTH"/>
    <property type="match status" value="1"/>
</dbReference>
<dbReference type="PANTHER" id="PTHR15124">
    <property type="entry name" value="SELENOPROTEIN W"/>
    <property type="match status" value="1"/>
</dbReference>
<dbReference type="PANTHER" id="PTHR15124:SF16">
    <property type="entry name" value="SELENOPROTEIN W"/>
    <property type="match status" value="1"/>
</dbReference>
<dbReference type="Pfam" id="PF10262">
    <property type="entry name" value="Rdx"/>
    <property type="match status" value="1"/>
</dbReference>
<dbReference type="SUPFAM" id="SSF52833">
    <property type="entry name" value="Thioredoxin-like"/>
    <property type="match status" value="1"/>
</dbReference>
<reference key="1">
    <citation type="journal article" date="1995" name="Proc. Natl. Acad. Sci. U.S.A.">
        <title>Rat skeletal muscle selenoprotein W: cDNA clone and mRNA modulation by dietary selenium.</title>
        <authorList>
            <person name="Vendeland S.C."/>
            <person name="Beilstein M.A."/>
            <person name="Yeh J.-Y."/>
            <person name="Ream W."/>
            <person name="Whanger P.D."/>
        </authorList>
    </citation>
    <scope>NUCLEOTIDE SEQUENCE [MRNA]</scope>
    <source>
        <strain>Sprague-Dawley</strain>
        <tissue>Skeletal muscle</tissue>
    </source>
</reference>
<reference key="2">
    <citation type="journal article" date="2004" name="Genome Res.">
        <title>The status, quality, and expansion of the NIH full-length cDNA project: the Mammalian Gene Collection (MGC).</title>
        <authorList>
            <consortium name="The MGC Project Team"/>
        </authorList>
    </citation>
    <scope>NUCLEOTIDE SEQUENCE [LARGE SCALE MRNA]</scope>
    <source>
        <tissue>Brain</tissue>
    </source>
</reference>
<reference key="3">
    <citation type="journal article" date="1993" name="FASEB J.">
        <title>Immunization with a synthetic peptide to produce antibodies to a rat muscle selenoprotein.</title>
        <authorList>
            <person name="Beilstein M.A."/>
            <person name="Vendeland S.C."/>
            <person name="Andrews J.S."/>
            <person name="Whanger P.D."/>
        </authorList>
    </citation>
    <scope>PROTEIN SEQUENCE OF 2-77</scope>
    <source>
        <tissue>Skeletal muscle</tissue>
    </source>
</reference>
<reference key="4">
    <citation type="journal article" date="1993" name="J. Biol. Chem.">
        <title>Purification and properties of selenoprotein W from rat muscle.</title>
        <authorList>
            <person name="Vendeland S.C."/>
            <person name="Beilstein M.A."/>
            <person name="Chen C.L."/>
            <person name="Jensen O.N."/>
            <person name="Barofsky E."/>
            <person name="Whanger P.D."/>
        </authorList>
    </citation>
    <scope>IDENTIFICATION BY MASS SPECTROMETRY</scope>
    <source>
        <strain>Sprague-Dawley</strain>
        <tissue>Skeletal muscle</tissue>
    </source>
</reference>
<reference key="5">
    <citation type="journal article" date="1995" name="FASEB J.">
        <title>Tissue distribution and influence of selenium status on levels of selenoprotein W.</title>
        <authorList>
            <person name="Yeh J.-Y."/>
            <person name="Beilstein M.A."/>
            <person name="Andrews J.S."/>
            <person name="Whanger P.D."/>
        </authorList>
    </citation>
    <scope>SUBCELLULAR LOCATION</scope>
    <scope>TISSUE SPECIFICITY</scope>
    <scope>INDUCTION</scope>
</reference>
<reference key="6">
    <citation type="journal article" date="1996" name="J. Inorg. Biochem.">
        <title>Selenoprotein W of rat muscle binds glutathione and an unknown small molecular weight moiety.</title>
        <authorList>
            <person name="Beilstein M.A."/>
            <person name="Vendeland S.C."/>
            <person name="Barofsky E."/>
            <person name="Jensen O.N."/>
            <person name="Whanger P.D."/>
        </authorList>
    </citation>
    <scope>GLUTATHIONYLATION</scope>
    <scope>MASS SPECTROMETRY</scope>
    <source>
        <tissue>Muscle</tissue>
    </source>
</reference>
<keyword id="KW-0049">Antioxidant</keyword>
<keyword id="KW-0963">Cytoplasm</keyword>
<keyword id="KW-0903">Direct protein sequencing</keyword>
<keyword id="KW-0318">Glutathionylation</keyword>
<keyword id="KW-0676">Redox-active center</keyword>
<keyword id="KW-1185">Reference proteome</keyword>
<keyword id="KW-0712">Selenocysteine</keyword>
<name>SELW_RAT</name>
<sequence>MALAVRVVYCGAUGYKPKYLQLKEKLEHEFPGCLDICGEGTPQVTGFFEVTVAGKLVHSKKRGDGYVDTESKFRKLVTAIKAALAQCQ</sequence>
<comment type="function">
    <text>Plays a role as a glutathione (GSH)-dependent antioxidant. May be involved in a redox-related process. May play a role in the myopathies of selenium deficiency.</text>
</comment>
<comment type="subunit">
    <text evidence="1">Interacts with DPYSL2, PRDX1, YWHAB, YWHAG, HSP70 and HSP90.</text>
</comment>
<comment type="subcellular location">
    <subcellularLocation>
        <location evidence="2">Cytoplasm</location>
    </subcellularLocation>
</comment>
<comment type="tissue specificity">
    <text evidence="2">Higher levels are seen in the muscle and brain while lower levels are seen in the spleen and testis. Not detected in liver, heart, kidney, intestinal mucosa, intestinal muscle, lung, plasma or erythrocytes (at protein level).</text>
</comment>
<comment type="induction">
    <text evidence="2">In skeletal muscle, by dietary selenium.</text>
</comment>
<comment type="mass spectrometry">
    <text>With bound glutathione and undetermined modification.</text>
</comment>
<comment type="mass spectrometry">
    <text>With bound glutathione.</text>
</comment>
<comment type="mass spectrometry">
    <text>With undetermined modification.</text>
</comment>
<comment type="mass spectrometry">
    <text>Without bound glutathione or undetermined modification.</text>
</comment>
<comment type="similarity">
    <text evidence="6">Belongs to the SelWTH family. Selenoprotein W subfamily.</text>
</comment>
<protein>
    <recommendedName>
        <fullName evidence="5">Selenoprotein W</fullName>
        <shortName evidence="5">SelW</shortName>
    </recommendedName>
</protein>
<evidence type="ECO:0000250" key="1"/>
<evidence type="ECO:0000269" key="2">
    <source>
    </source>
</evidence>
<evidence type="ECO:0000269" key="3">
    <source>
    </source>
</evidence>
<evidence type="ECO:0000269" key="4">
    <source ref="3"/>
</evidence>
<evidence type="ECO:0000303" key="5">
    <source>
    </source>
</evidence>
<evidence type="ECO:0000305" key="6"/>
<evidence type="ECO:0000312" key="7">
    <source>
        <dbReference type="RGD" id="3661"/>
    </source>
</evidence>
<gene>
    <name evidence="7" type="primary">Selenow</name>
    <name evidence="5" type="synonym">Selw</name>
    <name evidence="7" type="synonym">Sepw1</name>
</gene>
<proteinExistence type="evidence at protein level"/>
<organism>
    <name type="scientific">Rattus norvegicus</name>
    <name type="common">Rat</name>
    <dbReference type="NCBI Taxonomy" id="10116"/>
    <lineage>
        <taxon>Eukaryota</taxon>
        <taxon>Metazoa</taxon>
        <taxon>Chordata</taxon>
        <taxon>Craniata</taxon>
        <taxon>Vertebrata</taxon>
        <taxon>Euteleostomi</taxon>
        <taxon>Mammalia</taxon>
        <taxon>Eutheria</taxon>
        <taxon>Euarchontoglires</taxon>
        <taxon>Glires</taxon>
        <taxon>Rodentia</taxon>
        <taxon>Myomorpha</taxon>
        <taxon>Muroidea</taxon>
        <taxon>Muridae</taxon>
        <taxon>Murinae</taxon>
        <taxon>Rattus</taxon>
    </lineage>
</organism>
<feature type="initiator methionine" description="Removed" evidence="4">
    <location>
        <position position="1"/>
    </location>
</feature>
<feature type="chain" id="PRO_0000097682" description="Selenoprotein W">
    <location>
        <begin position="2"/>
        <end position="88"/>
    </location>
</feature>
<feature type="non-standard amino acid" description="Selenocysteine">
    <location>
        <position position="13"/>
    </location>
</feature>
<feature type="modified residue" description="S-glutathionyl cysteine" evidence="1">
    <location>
        <position position="37"/>
    </location>
</feature>
<feature type="cross-link" description="Cysteinyl-selenocysteine (Cys-Sec); redox-active" evidence="1">
    <location>
        <begin position="10"/>
        <end position="13"/>
    </location>
</feature>
<accession>P63301</accession>
<accession>O35965</accession>
<accession>P49904</accession>
<accession>Q9JIC2</accession>